<proteinExistence type="evidence at protein level"/>
<accession>Q55BY1</accession>
<comment type="function">
    <text evidence="1">Required for the assembly and/or stability of the 40S ribosomal subunit. Required for the processing of the 20S rRNA-precursor to mature 18S rRNA in a late step of the maturation of 40S ribosomal subunits.</text>
</comment>
<comment type="subunit">
    <text evidence="1">Component of the small ribosomal subunit. Mature ribosomes consist of a small (40S) and a large (60S) subunit. The 40S subunit contains about 33 different proteins and 1 molecule of RNA (18S). The 60S subunit contains about 49 different proteins and 3 molecules of RNA (25S, 5.8S and 5S). Interacts with ribosomal protein S21.</text>
</comment>
<comment type="subcellular location">
    <subcellularLocation>
        <location evidence="1">Cytoplasm</location>
    </subcellularLocation>
</comment>
<comment type="similarity">
    <text evidence="1">Belongs to the universal ribosomal protein uS2 family.</text>
</comment>
<sequence>MTQFPAALNPHQDDILKMLACQTHLGGNNVDVEMESYTWKRKDNGHFIINLAKTWEKIQLAARVIVAIENPADISVISAKPLGQRAVLKFANFIGATAFSGRFTPGTFTNQIQSKFTEPRLLIVADPLLDKQPLMEASYVNIPTIALCDTTSCLDGVDIAIPCNNRGKNSIALMFWLLAREVLYLRGTIPRNTTWSVKVDLFIYRDTDEEPEKEKTAAVAAAPVAAVEAVEFTQQPIAEWSAPDN</sequence>
<keyword id="KW-0963">Cytoplasm</keyword>
<keyword id="KW-0903">Direct protein sequencing</keyword>
<keyword id="KW-1185">Reference proteome</keyword>
<keyword id="KW-0687">Ribonucleoprotein</keyword>
<keyword id="KW-0689">Ribosomal protein</keyword>
<reference key="1">
    <citation type="journal article" date="2005" name="Nature">
        <title>The genome of the social amoeba Dictyostelium discoideum.</title>
        <authorList>
            <person name="Eichinger L."/>
            <person name="Pachebat J.A."/>
            <person name="Gloeckner G."/>
            <person name="Rajandream M.A."/>
            <person name="Sucgang R."/>
            <person name="Berriman M."/>
            <person name="Song J."/>
            <person name="Olsen R."/>
            <person name="Szafranski K."/>
            <person name="Xu Q."/>
            <person name="Tunggal B."/>
            <person name="Kummerfeld S."/>
            <person name="Madera M."/>
            <person name="Konfortov B.A."/>
            <person name="Rivero F."/>
            <person name="Bankier A.T."/>
            <person name="Lehmann R."/>
            <person name="Hamlin N."/>
            <person name="Davies R."/>
            <person name="Gaudet P."/>
            <person name="Fey P."/>
            <person name="Pilcher K."/>
            <person name="Chen G."/>
            <person name="Saunders D."/>
            <person name="Sodergren E.J."/>
            <person name="Davis P."/>
            <person name="Kerhornou A."/>
            <person name="Nie X."/>
            <person name="Hall N."/>
            <person name="Anjard C."/>
            <person name="Hemphill L."/>
            <person name="Bason N."/>
            <person name="Farbrother P."/>
            <person name="Desany B."/>
            <person name="Just E."/>
            <person name="Morio T."/>
            <person name="Rost R."/>
            <person name="Churcher C.M."/>
            <person name="Cooper J."/>
            <person name="Haydock S."/>
            <person name="van Driessche N."/>
            <person name="Cronin A."/>
            <person name="Goodhead I."/>
            <person name="Muzny D.M."/>
            <person name="Mourier T."/>
            <person name="Pain A."/>
            <person name="Lu M."/>
            <person name="Harper D."/>
            <person name="Lindsay R."/>
            <person name="Hauser H."/>
            <person name="James K.D."/>
            <person name="Quiles M."/>
            <person name="Madan Babu M."/>
            <person name="Saito T."/>
            <person name="Buchrieser C."/>
            <person name="Wardroper A."/>
            <person name="Felder M."/>
            <person name="Thangavelu M."/>
            <person name="Johnson D."/>
            <person name="Knights A."/>
            <person name="Loulseged H."/>
            <person name="Mungall K.L."/>
            <person name="Oliver K."/>
            <person name="Price C."/>
            <person name="Quail M.A."/>
            <person name="Urushihara H."/>
            <person name="Hernandez J."/>
            <person name="Rabbinowitsch E."/>
            <person name="Steffen D."/>
            <person name="Sanders M."/>
            <person name="Ma J."/>
            <person name="Kohara Y."/>
            <person name="Sharp S."/>
            <person name="Simmonds M.N."/>
            <person name="Spiegler S."/>
            <person name="Tivey A."/>
            <person name="Sugano S."/>
            <person name="White B."/>
            <person name="Walker D."/>
            <person name="Woodward J.R."/>
            <person name="Winckler T."/>
            <person name="Tanaka Y."/>
            <person name="Shaulsky G."/>
            <person name="Schleicher M."/>
            <person name="Weinstock G.M."/>
            <person name="Rosenthal A."/>
            <person name="Cox E.C."/>
            <person name="Chisholm R.L."/>
            <person name="Gibbs R.A."/>
            <person name="Loomis W.F."/>
            <person name="Platzer M."/>
            <person name="Kay R.R."/>
            <person name="Williams J.G."/>
            <person name="Dear P.H."/>
            <person name="Noegel A.A."/>
            <person name="Barrell B.G."/>
            <person name="Kuspa A."/>
        </authorList>
    </citation>
    <scope>NUCLEOTIDE SEQUENCE [LARGE SCALE GENOMIC DNA]</scope>
    <source>
        <strain>AX4</strain>
    </source>
</reference>
<reference key="2">
    <citation type="submission" date="2010-01" db="UniProtKB">
        <authorList>
            <person name="Bienvenut W.V."/>
            <person name="Ura S."/>
            <person name="Veltman D.M."/>
            <person name="Insall R.H."/>
        </authorList>
    </citation>
    <scope>PROTEIN SEQUENCE OF 2-17; 43-131 AND 181-186</scope>
    <scope>CLEAVAGE OF INITIATOR METHIONINE</scope>
    <scope>IDENTIFICATION BY MASS SPECTROMETRY</scope>
    <source>
        <strain>AX2</strain>
    </source>
</reference>
<reference key="3">
    <citation type="journal article" date="2006" name="Mol. Cell. Proteomics">
        <title>Proteomics fingerprinting of phagosome maturation and evidence for the role of a Galpha during uptake.</title>
        <authorList>
            <person name="Gotthardt D."/>
            <person name="Blancheteau V."/>
            <person name="Bosserhoff A."/>
            <person name="Ruppert T."/>
            <person name="Delorenzi M."/>
            <person name="Soldati T."/>
        </authorList>
    </citation>
    <scope>IDENTIFICATION BY MASS SPECTROMETRY [LARGE SCALE ANALYSIS]</scope>
    <source>
        <strain>AX2</strain>
    </source>
</reference>
<protein>
    <recommendedName>
        <fullName evidence="1">Small ribosomal subunit protein uS2</fullName>
    </recommendedName>
    <alternativeName>
        <fullName evidence="3">40S ribosomal protein SA</fullName>
    </alternativeName>
</protein>
<dbReference type="EMBL" id="AAFI02000005">
    <property type="protein sequence ID" value="EAL72508.1"/>
    <property type="molecule type" value="Genomic_DNA"/>
</dbReference>
<dbReference type="RefSeq" id="XP_646700.1">
    <property type="nucleotide sequence ID" value="XM_641608.1"/>
</dbReference>
<dbReference type="SMR" id="Q55BY1"/>
<dbReference type="FunCoup" id="Q55BY1">
    <property type="interactions" value="593"/>
</dbReference>
<dbReference type="STRING" id="44689.Q55BY1"/>
<dbReference type="PaxDb" id="44689-DDB0230016"/>
<dbReference type="EnsemblProtists" id="EAL72508">
    <property type="protein sequence ID" value="EAL72508"/>
    <property type="gene ID" value="DDB_G0270316"/>
</dbReference>
<dbReference type="GeneID" id="8617674"/>
<dbReference type="KEGG" id="ddi:DDB_G0270316"/>
<dbReference type="dictyBase" id="DDB_G0270316">
    <property type="gene designation" value="rpsA"/>
</dbReference>
<dbReference type="VEuPathDB" id="AmoebaDB:DDB_G0270316"/>
<dbReference type="eggNOG" id="KOG0830">
    <property type="taxonomic scope" value="Eukaryota"/>
</dbReference>
<dbReference type="HOGENOM" id="CLU_058171_2_0_1"/>
<dbReference type="InParanoid" id="Q55BY1"/>
<dbReference type="OMA" id="VKNFFEP"/>
<dbReference type="PhylomeDB" id="Q55BY1"/>
<dbReference type="Reactome" id="R-DDI-156827">
    <property type="pathway name" value="L13a-mediated translational silencing of Ceruloplasmin expression"/>
</dbReference>
<dbReference type="Reactome" id="R-DDI-1799339">
    <property type="pathway name" value="SRP-dependent cotranslational protein targeting to membrane"/>
</dbReference>
<dbReference type="Reactome" id="R-DDI-72689">
    <property type="pathway name" value="Formation of a pool of free 40S subunits"/>
</dbReference>
<dbReference type="Reactome" id="R-DDI-72695">
    <property type="pathway name" value="Formation of the ternary complex, and subsequently, the 43S complex"/>
</dbReference>
<dbReference type="Reactome" id="R-DDI-72702">
    <property type="pathway name" value="Ribosomal scanning and start codon recognition"/>
</dbReference>
<dbReference type="Reactome" id="R-DDI-72706">
    <property type="pathway name" value="GTP hydrolysis and joining of the 60S ribosomal subunit"/>
</dbReference>
<dbReference type="Reactome" id="R-DDI-975956">
    <property type="pathway name" value="Nonsense Mediated Decay (NMD) independent of the Exon Junction Complex (EJC)"/>
</dbReference>
<dbReference type="Reactome" id="R-DDI-975957">
    <property type="pathway name" value="Nonsense Mediated Decay (NMD) enhanced by the Exon Junction Complex (EJC)"/>
</dbReference>
<dbReference type="PRO" id="PR:Q55BY1"/>
<dbReference type="Proteomes" id="UP000002195">
    <property type="component" value="Chromosome 1"/>
</dbReference>
<dbReference type="GO" id="GO:0022627">
    <property type="term" value="C:cytosolic small ribosomal subunit"/>
    <property type="evidence" value="ECO:0000318"/>
    <property type="project" value="GO_Central"/>
</dbReference>
<dbReference type="GO" id="GO:0031012">
    <property type="term" value="C:extracellular matrix"/>
    <property type="evidence" value="ECO:0007005"/>
    <property type="project" value="dictyBase"/>
</dbReference>
<dbReference type="GO" id="GO:0045335">
    <property type="term" value="C:phagocytic vesicle"/>
    <property type="evidence" value="ECO:0007005"/>
    <property type="project" value="dictyBase"/>
</dbReference>
<dbReference type="GO" id="GO:0003735">
    <property type="term" value="F:structural constituent of ribosome"/>
    <property type="evidence" value="ECO:0000318"/>
    <property type="project" value="GO_Central"/>
</dbReference>
<dbReference type="GO" id="GO:0002181">
    <property type="term" value="P:cytoplasmic translation"/>
    <property type="evidence" value="ECO:0000318"/>
    <property type="project" value="GO_Central"/>
</dbReference>
<dbReference type="GO" id="GO:0009617">
    <property type="term" value="P:response to bacterium"/>
    <property type="evidence" value="ECO:0007007"/>
    <property type="project" value="dictyBase"/>
</dbReference>
<dbReference type="GO" id="GO:0000028">
    <property type="term" value="P:ribosomal small subunit assembly"/>
    <property type="evidence" value="ECO:0000318"/>
    <property type="project" value="GO_Central"/>
</dbReference>
<dbReference type="CDD" id="cd01425">
    <property type="entry name" value="RPS2"/>
    <property type="match status" value="1"/>
</dbReference>
<dbReference type="FunFam" id="3.40.50.10490:FF:000012">
    <property type="entry name" value="40S ribosomal protein SA"/>
    <property type="match status" value="1"/>
</dbReference>
<dbReference type="Gene3D" id="3.40.50.10490">
    <property type="entry name" value="Glucose-6-phosphate isomerase like protein, domain 1"/>
    <property type="match status" value="1"/>
</dbReference>
<dbReference type="HAMAP" id="MF_03015">
    <property type="entry name" value="Ribosomal_S2_euk"/>
    <property type="match status" value="1"/>
</dbReference>
<dbReference type="InterPro" id="IPR001865">
    <property type="entry name" value="Ribosomal_uS2"/>
</dbReference>
<dbReference type="InterPro" id="IPR018130">
    <property type="entry name" value="Ribosomal_uS2_CS"/>
</dbReference>
<dbReference type="InterPro" id="IPR027498">
    <property type="entry name" value="Ribosomal_uS2_euk"/>
</dbReference>
<dbReference type="InterPro" id="IPR005707">
    <property type="entry name" value="Ribosomal_uS2_euk/arc"/>
</dbReference>
<dbReference type="InterPro" id="IPR023591">
    <property type="entry name" value="Ribosomal_uS2_flav_dom_sf"/>
</dbReference>
<dbReference type="NCBIfam" id="TIGR01012">
    <property type="entry name" value="uS2_euk_arch"/>
    <property type="match status" value="1"/>
</dbReference>
<dbReference type="PANTHER" id="PTHR11489">
    <property type="entry name" value="40S RIBOSOMAL PROTEIN SA"/>
    <property type="match status" value="1"/>
</dbReference>
<dbReference type="Pfam" id="PF00318">
    <property type="entry name" value="Ribosomal_S2"/>
    <property type="match status" value="2"/>
</dbReference>
<dbReference type="PRINTS" id="PR00395">
    <property type="entry name" value="RIBOSOMALS2"/>
</dbReference>
<dbReference type="SUPFAM" id="SSF52313">
    <property type="entry name" value="Ribosomal protein S2"/>
    <property type="match status" value="1"/>
</dbReference>
<dbReference type="PROSITE" id="PS00962">
    <property type="entry name" value="RIBOSOMAL_S2_1"/>
    <property type="match status" value="1"/>
</dbReference>
<dbReference type="PROSITE" id="PS00963">
    <property type="entry name" value="RIBOSOMAL_S2_2"/>
    <property type="match status" value="1"/>
</dbReference>
<name>RSSA_DICDI</name>
<evidence type="ECO:0000255" key="1">
    <source>
        <dbReference type="HAMAP-Rule" id="MF_03015"/>
    </source>
</evidence>
<evidence type="ECO:0000269" key="2">
    <source ref="2"/>
</evidence>
<evidence type="ECO:0000305" key="3"/>
<feature type="initiator methionine" description="Removed" evidence="1 2">
    <location>
        <position position="1"/>
    </location>
</feature>
<feature type="chain" id="PRO_0000323430" description="Small ribosomal subunit protein uS2">
    <location>
        <begin position="2"/>
        <end position="245"/>
    </location>
</feature>
<gene>
    <name type="primary">rpsA</name>
    <name type="ORF">DDB_G0270316</name>
</gene>
<organism>
    <name type="scientific">Dictyostelium discoideum</name>
    <name type="common">Social amoeba</name>
    <dbReference type="NCBI Taxonomy" id="44689"/>
    <lineage>
        <taxon>Eukaryota</taxon>
        <taxon>Amoebozoa</taxon>
        <taxon>Evosea</taxon>
        <taxon>Eumycetozoa</taxon>
        <taxon>Dictyostelia</taxon>
        <taxon>Dictyosteliales</taxon>
        <taxon>Dictyosteliaceae</taxon>
        <taxon>Dictyostelium</taxon>
    </lineage>
</organism>